<protein>
    <recommendedName>
        <fullName evidence="1">Probable cytosol aminopeptidase</fullName>
        <ecNumber evidence="1">3.4.11.1</ecNumber>
    </recommendedName>
    <alternativeName>
        <fullName evidence="1">Leucine aminopeptidase</fullName>
        <shortName evidence="1">LAP</shortName>
        <ecNumber evidence="1">3.4.11.10</ecNumber>
    </alternativeName>
    <alternativeName>
        <fullName evidence="1">Leucyl aminopeptidase</fullName>
    </alternativeName>
</protein>
<evidence type="ECO:0000255" key="1">
    <source>
        <dbReference type="HAMAP-Rule" id="MF_00181"/>
    </source>
</evidence>
<gene>
    <name evidence="1" type="primary">pepA</name>
    <name type="ordered locus">HEAR2401</name>
</gene>
<proteinExistence type="inferred from homology"/>
<comment type="function">
    <text evidence="1">Presumably involved in the processing and regular turnover of intracellular proteins. Catalyzes the removal of unsubstituted N-terminal amino acids from various peptides.</text>
</comment>
<comment type="catalytic activity">
    <reaction evidence="1">
        <text>Release of an N-terminal amino acid, Xaa-|-Yaa-, in which Xaa is preferably Leu, but may be other amino acids including Pro although not Arg or Lys, and Yaa may be Pro. Amino acid amides and methyl esters are also readily hydrolyzed, but rates on arylamides are exceedingly low.</text>
        <dbReference type="EC" id="3.4.11.1"/>
    </reaction>
</comment>
<comment type="catalytic activity">
    <reaction evidence="1">
        <text>Release of an N-terminal amino acid, preferentially leucine, but not glutamic or aspartic acids.</text>
        <dbReference type="EC" id="3.4.11.10"/>
    </reaction>
</comment>
<comment type="cofactor">
    <cofactor evidence="1">
        <name>Mn(2+)</name>
        <dbReference type="ChEBI" id="CHEBI:29035"/>
    </cofactor>
    <text evidence="1">Binds 2 manganese ions per subunit.</text>
</comment>
<comment type="subcellular location">
    <subcellularLocation>
        <location evidence="1">Cytoplasm</location>
    </subcellularLocation>
</comment>
<comment type="similarity">
    <text evidence="1">Belongs to the peptidase M17 family.</text>
</comment>
<keyword id="KW-0031">Aminopeptidase</keyword>
<keyword id="KW-0963">Cytoplasm</keyword>
<keyword id="KW-0378">Hydrolase</keyword>
<keyword id="KW-0464">Manganese</keyword>
<keyword id="KW-0479">Metal-binding</keyword>
<keyword id="KW-0645">Protease</keyword>
<keyword id="KW-1185">Reference proteome</keyword>
<dbReference type="EC" id="3.4.11.1" evidence="1"/>
<dbReference type="EC" id="3.4.11.10" evidence="1"/>
<dbReference type="EMBL" id="CU207211">
    <property type="protein sequence ID" value="CAL62532.1"/>
    <property type="molecule type" value="Genomic_DNA"/>
</dbReference>
<dbReference type="SMR" id="A4G7P5"/>
<dbReference type="STRING" id="204773.HEAR2401"/>
<dbReference type="MEROPS" id="M17.003"/>
<dbReference type="KEGG" id="har:HEAR2401"/>
<dbReference type="eggNOG" id="COG0260">
    <property type="taxonomic scope" value="Bacteria"/>
</dbReference>
<dbReference type="HOGENOM" id="CLU_013734_0_1_4"/>
<dbReference type="OrthoDB" id="9809354at2"/>
<dbReference type="Proteomes" id="UP000006697">
    <property type="component" value="Chromosome"/>
</dbReference>
<dbReference type="GO" id="GO:0005737">
    <property type="term" value="C:cytoplasm"/>
    <property type="evidence" value="ECO:0007669"/>
    <property type="project" value="UniProtKB-SubCell"/>
</dbReference>
<dbReference type="GO" id="GO:0030145">
    <property type="term" value="F:manganese ion binding"/>
    <property type="evidence" value="ECO:0007669"/>
    <property type="project" value="UniProtKB-UniRule"/>
</dbReference>
<dbReference type="GO" id="GO:0070006">
    <property type="term" value="F:metalloaminopeptidase activity"/>
    <property type="evidence" value="ECO:0007669"/>
    <property type="project" value="InterPro"/>
</dbReference>
<dbReference type="GO" id="GO:0006508">
    <property type="term" value="P:proteolysis"/>
    <property type="evidence" value="ECO:0007669"/>
    <property type="project" value="UniProtKB-KW"/>
</dbReference>
<dbReference type="CDD" id="cd00433">
    <property type="entry name" value="Peptidase_M17"/>
    <property type="match status" value="1"/>
</dbReference>
<dbReference type="FunFam" id="3.40.630.10:FF:000004">
    <property type="entry name" value="Probable cytosol aminopeptidase"/>
    <property type="match status" value="1"/>
</dbReference>
<dbReference type="Gene3D" id="3.40.220.10">
    <property type="entry name" value="Leucine Aminopeptidase, subunit E, domain 1"/>
    <property type="match status" value="1"/>
</dbReference>
<dbReference type="Gene3D" id="3.40.630.10">
    <property type="entry name" value="Zn peptidases"/>
    <property type="match status" value="1"/>
</dbReference>
<dbReference type="HAMAP" id="MF_00181">
    <property type="entry name" value="Cytosol_peptidase_M17"/>
    <property type="match status" value="1"/>
</dbReference>
<dbReference type="InterPro" id="IPR011356">
    <property type="entry name" value="Leucine_aapep/pepB"/>
</dbReference>
<dbReference type="InterPro" id="IPR043472">
    <property type="entry name" value="Macro_dom-like"/>
</dbReference>
<dbReference type="InterPro" id="IPR000819">
    <property type="entry name" value="Peptidase_M17_C"/>
</dbReference>
<dbReference type="InterPro" id="IPR023042">
    <property type="entry name" value="Peptidase_M17_leu_NH2_pept"/>
</dbReference>
<dbReference type="InterPro" id="IPR008283">
    <property type="entry name" value="Peptidase_M17_N"/>
</dbReference>
<dbReference type="NCBIfam" id="NF002073">
    <property type="entry name" value="PRK00913.1-2"/>
    <property type="match status" value="1"/>
</dbReference>
<dbReference type="NCBIfam" id="NF002074">
    <property type="entry name" value="PRK00913.1-4"/>
    <property type="match status" value="1"/>
</dbReference>
<dbReference type="NCBIfam" id="NF002077">
    <property type="entry name" value="PRK00913.2-4"/>
    <property type="match status" value="1"/>
</dbReference>
<dbReference type="PANTHER" id="PTHR11963:SF23">
    <property type="entry name" value="CYTOSOL AMINOPEPTIDASE"/>
    <property type="match status" value="1"/>
</dbReference>
<dbReference type="PANTHER" id="PTHR11963">
    <property type="entry name" value="LEUCINE AMINOPEPTIDASE-RELATED"/>
    <property type="match status" value="1"/>
</dbReference>
<dbReference type="Pfam" id="PF00883">
    <property type="entry name" value="Peptidase_M17"/>
    <property type="match status" value="1"/>
</dbReference>
<dbReference type="Pfam" id="PF02789">
    <property type="entry name" value="Peptidase_M17_N"/>
    <property type="match status" value="1"/>
</dbReference>
<dbReference type="PRINTS" id="PR00481">
    <property type="entry name" value="LAMNOPPTDASE"/>
</dbReference>
<dbReference type="SUPFAM" id="SSF52949">
    <property type="entry name" value="Macro domain-like"/>
    <property type="match status" value="1"/>
</dbReference>
<dbReference type="SUPFAM" id="SSF53187">
    <property type="entry name" value="Zn-dependent exopeptidases"/>
    <property type="match status" value="1"/>
</dbReference>
<dbReference type="PROSITE" id="PS00631">
    <property type="entry name" value="CYTOSOL_AP"/>
    <property type="match status" value="1"/>
</dbReference>
<reference key="1">
    <citation type="journal article" date="2007" name="PLoS Genet.">
        <title>A tale of two oxidation states: bacterial colonization of arsenic-rich environments.</title>
        <authorList>
            <person name="Muller D."/>
            <person name="Medigue C."/>
            <person name="Koechler S."/>
            <person name="Barbe V."/>
            <person name="Barakat M."/>
            <person name="Talla E."/>
            <person name="Bonnefoy V."/>
            <person name="Krin E."/>
            <person name="Arsene-Ploetze F."/>
            <person name="Carapito C."/>
            <person name="Chandler M."/>
            <person name="Cournoyer B."/>
            <person name="Cruveiller S."/>
            <person name="Dossat C."/>
            <person name="Duval S."/>
            <person name="Heymann M."/>
            <person name="Leize E."/>
            <person name="Lieutaud A."/>
            <person name="Lievremont D."/>
            <person name="Makita Y."/>
            <person name="Mangenot S."/>
            <person name="Nitschke W."/>
            <person name="Ortet P."/>
            <person name="Perdrial N."/>
            <person name="Schoepp B."/>
            <person name="Siguier P."/>
            <person name="Simeonova D.D."/>
            <person name="Rouy Z."/>
            <person name="Segurens B."/>
            <person name="Turlin E."/>
            <person name="Vallenet D."/>
            <person name="van Dorsselaer A."/>
            <person name="Weiss S."/>
            <person name="Weissenbach J."/>
            <person name="Lett M.-C."/>
            <person name="Danchin A."/>
            <person name="Bertin P.N."/>
        </authorList>
    </citation>
    <scope>NUCLEOTIDE SEQUENCE [LARGE SCALE GENOMIC DNA]</scope>
    <source>
        <strain>ULPAs1</strain>
    </source>
</reference>
<name>AMPA_HERAR</name>
<sequence length="503" mass="52346">MDFSIKPLDAKSTIASIKTGCIAVAVFEDKKLSAAAQALDQKGGISAALKSGDISGKAGSTLLLRGVSGVAAERVLLVGLGKEDPVSEKDFSSAVQAVARAFTSLGATEAVIALPLDAVAARDAAWSIRCTILNTRDASYRFDSLKSKKEPAPAGVKKIVFAVSAASTAIAKDAIAQAVAQANGIDLTKDLGNLPANVCTPTYLANTAKKMAKEFKLQVEVLDRKQLQALKMGSFLSVTNGSVEPPKFIVLKHMGGKAKDAPVVLVGKGITFDSGGISLKPGAAMDEMKYDMGGAASVLGTMRAIAELKLKLNVIVVIPTCENMPSGSATKPGDIVTSMSGQTIEVLNTDAEGRLVLCDALTYVERFKPAAVIDVATLTGACITALGHHNSGLFTRSDDAHDALANELLAAGKASGDTAWRMPIEDSYQEQLKSNFADMANIGGPAGGAVTAACFLERYTKKYTWAHLDIAGTAWKSGAAKGSTGRPVPLLTSFLIQRAQTAR</sequence>
<accession>A4G7P5</accession>
<feature type="chain" id="PRO_1000019928" description="Probable cytosol aminopeptidase">
    <location>
        <begin position="1"/>
        <end position="503"/>
    </location>
</feature>
<feature type="active site" evidence="1">
    <location>
        <position position="280"/>
    </location>
</feature>
<feature type="active site" evidence="1">
    <location>
        <position position="354"/>
    </location>
</feature>
<feature type="binding site" evidence="1">
    <location>
        <position position="268"/>
    </location>
    <ligand>
        <name>Mn(2+)</name>
        <dbReference type="ChEBI" id="CHEBI:29035"/>
        <label>2</label>
    </ligand>
</feature>
<feature type="binding site" evidence="1">
    <location>
        <position position="273"/>
    </location>
    <ligand>
        <name>Mn(2+)</name>
        <dbReference type="ChEBI" id="CHEBI:29035"/>
        <label>1</label>
    </ligand>
</feature>
<feature type="binding site" evidence="1">
    <location>
        <position position="273"/>
    </location>
    <ligand>
        <name>Mn(2+)</name>
        <dbReference type="ChEBI" id="CHEBI:29035"/>
        <label>2</label>
    </ligand>
</feature>
<feature type="binding site" evidence="1">
    <location>
        <position position="291"/>
    </location>
    <ligand>
        <name>Mn(2+)</name>
        <dbReference type="ChEBI" id="CHEBI:29035"/>
        <label>2</label>
    </ligand>
</feature>
<feature type="binding site" evidence="1">
    <location>
        <position position="350"/>
    </location>
    <ligand>
        <name>Mn(2+)</name>
        <dbReference type="ChEBI" id="CHEBI:29035"/>
        <label>1</label>
    </ligand>
</feature>
<feature type="binding site" evidence="1">
    <location>
        <position position="352"/>
    </location>
    <ligand>
        <name>Mn(2+)</name>
        <dbReference type="ChEBI" id="CHEBI:29035"/>
        <label>1</label>
    </ligand>
</feature>
<feature type="binding site" evidence="1">
    <location>
        <position position="352"/>
    </location>
    <ligand>
        <name>Mn(2+)</name>
        <dbReference type="ChEBI" id="CHEBI:29035"/>
        <label>2</label>
    </ligand>
</feature>
<organism>
    <name type="scientific">Herminiimonas arsenicoxydans</name>
    <dbReference type="NCBI Taxonomy" id="204773"/>
    <lineage>
        <taxon>Bacteria</taxon>
        <taxon>Pseudomonadati</taxon>
        <taxon>Pseudomonadota</taxon>
        <taxon>Betaproteobacteria</taxon>
        <taxon>Burkholderiales</taxon>
        <taxon>Oxalobacteraceae</taxon>
        <taxon>Herminiimonas</taxon>
    </lineage>
</organism>